<organism>
    <name type="scientific">Neisseria meningitidis serogroup B (strain ATCC BAA-335 / MC58)</name>
    <dbReference type="NCBI Taxonomy" id="122586"/>
    <lineage>
        <taxon>Bacteria</taxon>
        <taxon>Pseudomonadati</taxon>
        <taxon>Pseudomonadota</taxon>
        <taxon>Betaproteobacteria</taxon>
        <taxon>Neisseriales</taxon>
        <taxon>Neisseriaceae</taxon>
        <taxon>Neisseria</taxon>
    </lineage>
</organism>
<proteinExistence type="evidence at protein level"/>
<keyword id="KW-0963">Cytoplasm</keyword>
<keyword id="KW-0235">DNA replication</keyword>
<keyword id="KW-0239">DNA-directed DNA polymerase</keyword>
<keyword id="KW-0548">Nucleotidyltransferase</keyword>
<keyword id="KW-1185">Reference proteome</keyword>
<keyword id="KW-0808">Transferase</keyword>
<reference key="1">
    <citation type="journal article" date="2000" name="Science">
        <title>Complete genome sequence of Neisseria meningitidis serogroup B strain MC58.</title>
        <authorList>
            <person name="Tettelin H."/>
            <person name="Saunders N.J."/>
            <person name="Heidelberg J.F."/>
            <person name="Jeffries A.C."/>
            <person name="Nelson K.E."/>
            <person name="Eisen J.A."/>
            <person name="Ketchum K.A."/>
            <person name="Hood D.W."/>
            <person name="Peden J.F."/>
            <person name="Dodson R.J."/>
            <person name="Nelson W.C."/>
            <person name="Gwinn M.L."/>
            <person name="DeBoy R.T."/>
            <person name="Peterson J.D."/>
            <person name="Hickey E.K."/>
            <person name="Haft D.H."/>
            <person name="Salzberg S.L."/>
            <person name="White O."/>
            <person name="Fleischmann R.D."/>
            <person name="Dougherty B.A."/>
            <person name="Mason T.M."/>
            <person name="Ciecko A."/>
            <person name="Parksey D.S."/>
            <person name="Blair E."/>
            <person name="Cittone H."/>
            <person name="Clark E.B."/>
            <person name="Cotton M.D."/>
            <person name="Utterback T.R."/>
            <person name="Khouri H.M."/>
            <person name="Qin H."/>
            <person name="Vamathevan J.J."/>
            <person name="Gill J."/>
            <person name="Scarlato V."/>
            <person name="Masignani V."/>
            <person name="Pizza M."/>
            <person name="Grandi G."/>
            <person name="Sun L."/>
            <person name="Smith H.O."/>
            <person name="Fraser C.M."/>
            <person name="Moxon E.R."/>
            <person name="Rappuoli R."/>
            <person name="Venter J.C."/>
        </authorList>
    </citation>
    <scope>NUCLEOTIDE SEQUENCE [LARGE SCALE GENOMIC DNA]</scope>
    <source>
        <strain>ATCC BAA-335 / MC58</strain>
    </source>
</reference>
<reference key="2">
    <citation type="journal article" date="2005" name="Hum. Vaccin.">
        <title>Characterization of the protein content of a meningococcal outer membrane vesicle vaccine by polyacrylamide gel electrophoresis and mass spectrometry.</title>
        <authorList>
            <person name="Vipond C."/>
            <person name="Wheeler J.X."/>
            <person name="Jones C."/>
            <person name="Feavers I.M."/>
            <person name="Suker J."/>
        </authorList>
    </citation>
    <scope>IDENTIFICATION BY MASS SPECTROMETRY [LARGE SCALE ANALYSIS]</scope>
</reference>
<gene>
    <name type="primary">dnaE</name>
    <name type="ordered locus">NMB1827</name>
</gene>
<dbReference type="EC" id="2.7.7.7"/>
<dbReference type="EMBL" id="AE002098">
    <property type="protein sequence ID" value="AAF42162.1"/>
    <property type="molecule type" value="Genomic_DNA"/>
</dbReference>
<dbReference type="PIR" id="H81037">
    <property type="entry name" value="H81037"/>
</dbReference>
<dbReference type="RefSeq" id="NP_274824.1">
    <property type="nucleotide sequence ID" value="NC_003112.2"/>
</dbReference>
<dbReference type="RefSeq" id="WP_002225661.1">
    <property type="nucleotide sequence ID" value="NC_003112.2"/>
</dbReference>
<dbReference type="SMR" id="Q9JXZ2"/>
<dbReference type="FunCoup" id="Q9JXZ2">
    <property type="interactions" value="348"/>
</dbReference>
<dbReference type="STRING" id="122586.NMB1827"/>
<dbReference type="PaxDb" id="122586-NMB1827"/>
<dbReference type="KEGG" id="nme:NMB1827"/>
<dbReference type="PATRIC" id="fig|122586.8.peg.2326"/>
<dbReference type="HOGENOM" id="CLU_001600_0_2_4"/>
<dbReference type="InParanoid" id="Q9JXZ2"/>
<dbReference type="OrthoDB" id="9803237at2"/>
<dbReference type="Proteomes" id="UP000000425">
    <property type="component" value="Chromosome"/>
</dbReference>
<dbReference type="GO" id="GO:0005737">
    <property type="term" value="C:cytoplasm"/>
    <property type="evidence" value="ECO:0007669"/>
    <property type="project" value="UniProtKB-SubCell"/>
</dbReference>
<dbReference type="GO" id="GO:0008408">
    <property type="term" value="F:3'-5' exonuclease activity"/>
    <property type="evidence" value="ECO:0007669"/>
    <property type="project" value="InterPro"/>
</dbReference>
<dbReference type="GO" id="GO:0003887">
    <property type="term" value="F:DNA-directed DNA polymerase activity"/>
    <property type="evidence" value="ECO:0000318"/>
    <property type="project" value="GO_Central"/>
</dbReference>
<dbReference type="GO" id="GO:0003676">
    <property type="term" value="F:nucleic acid binding"/>
    <property type="evidence" value="ECO:0007669"/>
    <property type="project" value="InterPro"/>
</dbReference>
<dbReference type="GO" id="GO:0006260">
    <property type="term" value="P:DNA replication"/>
    <property type="evidence" value="ECO:0007669"/>
    <property type="project" value="UniProtKB-KW"/>
</dbReference>
<dbReference type="CDD" id="cd04485">
    <property type="entry name" value="DnaE_OBF"/>
    <property type="match status" value="1"/>
</dbReference>
<dbReference type="CDD" id="cd07433">
    <property type="entry name" value="PHP_PolIIIA_DnaE1"/>
    <property type="match status" value="1"/>
</dbReference>
<dbReference type="Gene3D" id="1.10.150.870">
    <property type="match status" value="1"/>
</dbReference>
<dbReference type="Gene3D" id="1.10.10.1600">
    <property type="entry name" value="Bacterial DNA polymerase III alpha subunit, thumb domain"/>
    <property type="match status" value="1"/>
</dbReference>
<dbReference type="Gene3D" id="3.20.20.140">
    <property type="entry name" value="Metal-dependent hydrolases"/>
    <property type="match status" value="1"/>
</dbReference>
<dbReference type="Gene3D" id="2.40.50.140">
    <property type="entry name" value="Nucleic acid-binding proteins"/>
    <property type="match status" value="1"/>
</dbReference>
<dbReference type="InterPro" id="IPR011708">
    <property type="entry name" value="DNA_pol3_alpha_NTPase_dom"/>
</dbReference>
<dbReference type="InterPro" id="IPR041931">
    <property type="entry name" value="DNA_pol3_alpha_thumb_dom"/>
</dbReference>
<dbReference type="InterPro" id="IPR040982">
    <property type="entry name" value="DNA_pol3_finger"/>
</dbReference>
<dbReference type="InterPro" id="IPR048472">
    <property type="entry name" value="DNA_pol_IIIA_C"/>
</dbReference>
<dbReference type="InterPro" id="IPR004805">
    <property type="entry name" value="DnaE2/DnaE/PolC"/>
</dbReference>
<dbReference type="InterPro" id="IPR029460">
    <property type="entry name" value="DNAPol_HHH"/>
</dbReference>
<dbReference type="InterPro" id="IPR012340">
    <property type="entry name" value="NA-bd_OB-fold"/>
</dbReference>
<dbReference type="InterPro" id="IPR004365">
    <property type="entry name" value="NA-bd_OB_tRNA"/>
</dbReference>
<dbReference type="InterPro" id="IPR004013">
    <property type="entry name" value="PHP_dom"/>
</dbReference>
<dbReference type="InterPro" id="IPR003141">
    <property type="entry name" value="Pol/His_phosphatase_N"/>
</dbReference>
<dbReference type="InterPro" id="IPR016195">
    <property type="entry name" value="Pol/histidinol_Pase-like"/>
</dbReference>
<dbReference type="InterPro" id="IPR049821">
    <property type="entry name" value="PolIIIA_DnaE1_PHP"/>
</dbReference>
<dbReference type="NCBIfam" id="TIGR00594">
    <property type="entry name" value="polc"/>
    <property type="match status" value="1"/>
</dbReference>
<dbReference type="NCBIfam" id="NF004226">
    <property type="entry name" value="PRK05673.1"/>
    <property type="match status" value="1"/>
</dbReference>
<dbReference type="PANTHER" id="PTHR32294">
    <property type="entry name" value="DNA POLYMERASE III SUBUNIT ALPHA"/>
    <property type="match status" value="1"/>
</dbReference>
<dbReference type="PANTHER" id="PTHR32294:SF0">
    <property type="entry name" value="DNA POLYMERASE III SUBUNIT ALPHA"/>
    <property type="match status" value="1"/>
</dbReference>
<dbReference type="Pfam" id="PF07733">
    <property type="entry name" value="DNA_pol3_alpha"/>
    <property type="match status" value="1"/>
</dbReference>
<dbReference type="Pfam" id="PF17657">
    <property type="entry name" value="DNA_pol3_finger"/>
    <property type="match status" value="1"/>
</dbReference>
<dbReference type="Pfam" id="PF20914">
    <property type="entry name" value="DNA_pol_IIIA_C"/>
    <property type="match status" value="1"/>
</dbReference>
<dbReference type="Pfam" id="PF14579">
    <property type="entry name" value="HHH_6"/>
    <property type="match status" value="1"/>
</dbReference>
<dbReference type="Pfam" id="PF02811">
    <property type="entry name" value="PHP"/>
    <property type="match status" value="1"/>
</dbReference>
<dbReference type="Pfam" id="PF01336">
    <property type="entry name" value="tRNA_anti-codon"/>
    <property type="match status" value="1"/>
</dbReference>
<dbReference type="SMART" id="SM00481">
    <property type="entry name" value="POLIIIAc"/>
    <property type="match status" value="1"/>
</dbReference>
<dbReference type="SUPFAM" id="SSF89550">
    <property type="entry name" value="PHP domain-like"/>
    <property type="match status" value="1"/>
</dbReference>
<evidence type="ECO:0000250" key="1"/>
<evidence type="ECO:0000305" key="2"/>
<feature type="chain" id="PRO_0000103332" description="DNA polymerase III subunit alpha">
    <location>
        <begin position="1"/>
        <end position="1144"/>
    </location>
</feature>
<accession>Q9JXZ2</accession>
<comment type="function">
    <text evidence="1">DNA polymerase III is a complex, multichain enzyme responsible for most of the replicative synthesis in bacteria. This DNA polymerase also exhibits 3' to 5' exonuclease activity. The alpha chain is the DNA polymerase (By similarity).</text>
</comment>
<comment type="catalytic activity">
    <reaction>
        <text>DNA(n) + a 2'-deoxyribonucleoside 5'-triphosphate = DNA(n+1) + diphosphate</text>
        <dbReference type="Rhea" id="RHEA:22508"/>
        <dbReference type="Rhea" id="RHEA-COMP:17339"/>
        <dbReference type="Rhea" id="RHEA-COMP:17340"/>
        <dbReference type="ChEBI" id="CHEBI:33019"/>
        <dbReference type="ChEBI" id="CHEBI:61560"/>
        <dbReference type="ChEBI" id="CHEBI:173112"/>
        <dbReference type="EC" id="2.7.7.7"/>
    </reaction>
</comment>
<comment type="subunit">
    <text evidence="1">DNA polymerase III contains a core (composed of alpha, epsilon and theta chains) that associates with a tau subunit. This core dimerizes to form the PolIII' complex. PolIII' associates with the gamma complex (composed of gamma, delta, delta', psi and chi chains) and with the beta chain to form the complete DNA polymerase III complex (By similarity).</text>
</comment>
<comment type="subcellular location">
    <subcellularLocation>
        <location evidence="1">Cytoplasm</location>
    </subcellularLocation>
</comment>
<comment type="miscellaneous">
    <text>Present in outer membrane vesicle formulations which are used as vaccines in human.</text>
</comment>
<comment type="similarity">
    <text evidence="2">Belongs to the DNA polymerase type-C family. DnaE subfamily.</text>
</comment>
<sequence length="1144" mass="127136">MTEPTYIPLRLHTEFSITDGMVRIKKLIAKAQEYGLPALGISDLMNEFGLVKFYKACRSAGIKPIGAADVRIGNPDAPDKPFRAMLIIRNDAGYLRLSELLTAAYVGKDRNVHHAELNPEWLENGDNSGLICLSGAHYGEVGVNLLNGNEDAARTAALKYAAWFPDAFYMELQRLPERPEWEACVSGSVKLAEELGLPVVATHPTQFMSRDDFNAHEARVCIAGGWVLTDKKRPRDFTPGQFFIPPETMAERFADLPEALENTVEIAKRCNLHITLGKNFLPLFPTPDGLSLDDYLIKLSNEGLQERMVQLYPDEAERAAKMPEYQERLDFELNIIIQMKFPGYFLIVQDFINWAKTHGCPVGPGRGSGAGSLVAYSLKITDLDPLKYALLFERFLNPERVSMPDFDVDFCQSNRGRVIEYVREKYGAEAVSQIVTFGTMSSKAVIRDVGRVLELPFMLCDKLSKLIPLEANKPLSLEKAMETEPQIQELIEAEEADELITLAKKLEDLTRGLGMHAGGVLIAPGKISDYSPVYQADESASPVSMYDKGDVEDVGLVKFDFLGLRNLTIIEMAQNNIKNTTGDIIDVGKIPLDDQVAYQIFRDANTTAVFQFESTGMKKMLKTAHTTKFEELIAFVSLYRPGPMDNIPDFVARMKGQEFQYIHPLLEGILAPTYGIMVYQEQVMQAAQIIGGYSLGGADLLRRAMGKKKPEEMVKHREIFAEGAAKQGISREKSDEIFNYMEKFAGYGFNKSHAAAYALISYQTAWLKAHYPAEFMAATMSSELDNTDQLKHFYDDCRANGIEFLPPDINESDYRFTPYPDMKIRYALGAIKGTGEAAVESITAARQSGGKFTGLLDFCERVGKEHMNRRTLEALIRGGAFDSIEPNRAMLLANIDLAMDNADQKAANANQGGLFDMMEDAIEPVRLIDAPMWSESEKLAEEKTVIGFYLSGHPFGPYAQEVRQIAPTKLDRLKPQDSVRLAGFVTAVRTMMGKRGKIAFVSLEDLSGQVEIMVGGQTLENCADCLKADQVLIIESKVSRDDYGGGDGLRILANQVMTLQTARERYARSLSLALAPHHDIGGLVRLLAAHQLPDTPRIPLQLSYANEKASGRLQVPPKWTVTPSSALFGELETLLGSRSVRVNW</sequence>
<protein>
    <recommendedName>
        <fullName>DNA polymerase III subunit alpha</fullName>
        <ecNumber>2.7.7.7</ecNumber>
    </recommendedName>
</protein>
<name>DPO3A_NEIMB</name>